<sequence>MFVDQVTISLKAGDGGNGITAYRREKYVPFGGPAGGDGGKGASVVFEVDEGLRTLLDFRYQRHFKAKKGENGQSSNMHGRGADDLVLKVPPGTIIKSVETDEVLADLVEDGQRAVVARGGRGGRGNSRFATPRNPAPDFSENGEPGEELDVTLELKLLADVGLVGFPSVGKSTLLSIVSKAKPKIGAYHFTTIKPNLGVVSTPDNRSFVMADLPGLIEGASDGVGLGHQFLRHVERTKVIVHMIDMSGSEGRDPFDDYQIINKELVNYKQRLEDRPQIVVANKMDMPDAQDNLTLFKEQVDDSVTIIPVSTITRDNIEQLLYAIADKLDEVKDIDFSVDNDEEIGVNRVLYKHTPSQDKFTITRDDDGAYVVSGNAIERMFKMTDFNSDPAVRRFARQMRSMGIDDALRERGCSNGDIVRILGGEFEFVE</sequence>
<keyword id="KW-0963">Cytoplasm</keyword>
<keyword id="KW-0342">GTP-binding</keyword>
<keyword id="KW-0378">Hydrolase</keyword>
<keyword id="KW-0460">Magnesium</keyword>
<keyword id="KW-0479">Metal-binding</keyword>
<keyword id="KW-0547">Nucleotide-binding</keyword>
<reference key="1">
    <citation type="journal article" date="2005" name="J. Bacteriol.">
        <title>Whole-genome sequencing of Staphylococcus haemolyticus uncovers the extreme plasticity of its genome and the evolution of human-colonizing staphylococcal species.</title>
        <authorList>
            <person name="Takeuchi F."/>
            <person name="Watanabe S."/>
            <person name="Baba T."/>
            <person name="Yuzawa H."/>
            <person name="Ito T."/>
            <person name="Morimoto Y."/>
            <person name="Kuroda M."/>
            <person name="Cui L."/>
            <person name="Takahashi M."/>
            <person name="Ankai A."/>
            <person name="Baba S."/>
            <person name="Fukui S."/>
            <person name="Lee J.C."/>
            <person name="Hiramatsu K."/>
        </authorList>
    </citation>
    <scope>NUCLEOTIDE SEQUENCE [LARGE SCALE GENOMIC DNA]</scope>
    <source>
        <strain>JCSC1435</strain>
    </source>
</reference>
<feature type="chain" id="PRO_0000386285" description="GTPase Obg">
    <location>
        <begin position="1"/>
        <end position="430"/>
    </location>
</feature>
<feature type="domain" description="Obg" evidence="3">
    <location>
        <begin position="1"/>
        <end position="158"/>
    </location>
</feature>
<feature type="domain" description="OBG-type G" evidence="1">
    <location>
        <begin position="159"/>
        <end position="329"/>
    </location>
</feature>
<feature type="domain" description="OCT" evidence="2">
    <location>
        <begin position="352"/>
        <end position="430"/>
    </location>
</feature>
<feature type="region of interest" description="Disordered" evidence="4">
    <location>
        <begin position="118"/>
        <end position="145"/>
    </location>
</feature>
<feature type="binding site" evidence="1">
    <location>
        <begin position="165"/>
        <end position="172"/>
    </location>
    <ligand>
        <name>GTP</name>
        <dbReference type="ChEBI" id="CHEBI:37565"/>
    </ligand>
</feature>
<feature type="binding site" evidence="1">
    <location>
        <position position="172"/>
    </location>
    <ligand>
        <name>Mg(2+)</name>
        <dbReference type="ChEBI" id="CHEBI:18420"/>
    </ligand>
</feature>
<feature type="binding site" evidence="1">
    <location>
        <begin position="190"/>
        <end position="194"/>
    </location>
    <ligand>
        <name>GTP</name>
        <dbReference type="ChEBI" id="CHEBI:37565"/>
    </ligand>
</feature>
<feature type="binding site" evidence="1">
    <location>
        <position position="192"/>
    </location>
    <ligand>
        <name>Mg(2+)</name>
        <dbReference type="ChEBI" id="CHEBI:18420"/>
    </ligand>
</feature>
<feature type="binding site" evidence="1">
    <location>
        <begin position="212"/>
        <end position="215"/>
    </location>
    <ligand>
        <name>GTP</name>
        <dbReference type="ChEBI" id="CHEBI:37565"/>
    </ligand>
</feature>
<feature type="binding site" evidence="1">
    <location>
        <begin position="282"/>
        <end position="285"/>
    </location>
    <ligand>
        <name>GTP</name>
        <dbReference type="ChEBI" id="CHEBI:37565"/>
    </ligand>
</feature>
<feature type="binding site" evidence="1">
    <location>
        <begin position="310"/>
        <end position="312"/>
    </location>
    <ligand>
        <name>GTP</name>
        <dbReference type="ChEBI" id="CHEBI:37565"/>
    </ligand>
</feature>
<name>OBG_STAHJ</name>
<gene>
    <name evidence="1" type="primary">obg</name>
    <name type="ordered locus">SH1277</name>
</gene>
<evidence type="ECO:0000255" key="1">
    <source>
        <dbReference type="HAMAP-Rule" id="MF_01454"/>
    </source>
</evidence>
<evidence type="ECO:0000255" key="2">
    <source>
        <dbReference type="PROSITE-ProRule" id="PRU01229"/>
    </source>
</evidence>
<evidence type="ECO:0000255" key="3">
    <source>
        <dbReference type="PROSITE-ProRule" id="PRU01231"/>
    </source>
</evidence>
<evidence type="ECO:0000256" key="4">
    <source>
        <dbReference type="SAM" id="MobiDB-lite"/>
    </source>
</evidence>
<accession>Q4L6Y9</accession>
<protein>
    <recommendedName>
        <fullName evidence="1">GTPase Obg</fullName>
        <ecNumber evidence="1">3.6.5.-</ecNumber>
    </recommendedName>
    <alternativeName>
        <fullName evidence="1">GTP-binding protein Obg</fullName>
    </alternativeName>
</protein>
<organism>
    <name type="scientific">Staphylococcus haemolyticus (strain JCSC1435)</name>
    <dbReference type="NCBI Taxonomy" id="279808"/>
    <lineage>
        <taxon>Bacteria</taxon>
        <taxon>Bacillati</taxon>
        <taxon>Bacillota</taxon>
        <taxon>Bacilli</taxon>
        <taxon>Bacillales</taxon>
        <taxon>Staphylococcaceae</taxon>
        <taxon>Staphylococcus</taxon>
    </lineage>
</organism>
<dbReference type="EC" id="3.6.5.-" evidence="1"/>
<dbReference type="EMBL" id="AP006716">
    <property type="protein sequence ID" value="BAE04586.1"/>
    <property type="molecule type" value="Genomic_DNA"/>
</dbReference>
<dbReference type="SMR" id="Q4L6Y9"/>
<dbReference type="KEGG" id="sha:SH1277"/>
<dbReference type="eggNOG" id="COG0536">
    <property type="taxonomic scope" value="Bacteria"/>
</dbReference>
<dbReference type="HOGENOM" id="CLU_011747_2_1_9"/>
<dbReference type="OrthoDB" id="9807318at2"/>
<dbReference type="Proteomes" id="UP000000543">
    <property type="component" value="Chromosome"/>
</dbReference>
<dbReference type="GO" id="GO:0005737">
    <property type="term" value="C:cytoplasm"/>
    <property type="evidence" value="ECO:0007669"/>
    <property type="project" value="UniProtKB-SubCell"/>
</dbReference>
<dbReference type="GO" id="GO:0005525">
    <property type="term" value="F:GTP binding"/>
    <property type="evidence" value="ECO:0007669"/>
    <property type="project" value="UniProtKB-UniRule"/>
</dbReference>
<dbReference type="GO" id="GO:0003924">
    <property type="term" value="F:GTPase activity"/>
    <property type="evidence" value="ECO:0007669"/>
    <property type="project" value="UniProtKB-UniRule"/>
</dbReference>
<dbReference type="GO" id="GO:0000287">
    <property type="term" value="F:magnesium ion binding"/>
    <property type="evidence" value="ECO:0007669"/>
    <property type="project" value="InterPro"/>
</dbReference>
<dbReference type="GO" id="GO:0042254">
    <property type="term" value="P:ribosome biogenesis"/>
    <property type="evidence" value="ECO:0007669"/>
    <property type="project" value="UniProtKB-UniRule"/>
</dbReference>
<dbReference type="CDD" id="cd01898">
    <property type="entry name" value="Obg"/>
    <property type="match status" value="1"/>
</dbReference>
<dbReference type="FunFam" id="2.70.210.12:FF:000001">
    <property type="entry name" value="GTPase Obg"/>
    <property type="match status" value="1"/>
</dbReference>
<dbReference type="FunFam" id="3.40.50.300:FF:000515">
    <property type="entry name" value="GTPase Obg"/>
    <property type="match status" value="1"/>
</dbReference>
<dbReference type="Gene3D" id="3.30.300.350">
    <property type="entry name" value="GTP-binding protein OBG, C-terminal domain"/>
    <property type="match status" value="1"/>
</dbReference>
<dbReference type="Gene3D" id="2.70.210.12">
    <property type="entry name" value="GTP1/OBG domain"/>
    <property type="match status" value="1"/>
</dbReference>
<dbReference type="Gene3D" id="3.40.50.300">
    <property type="entry name" value="P-loop containing nucleotide triphosphate hydrolases"/>
    <property type="match status" value="1"/>
</dbReference>
<dbReference type="HAMAP" id="MF_01454">
    <property type="entry name" value="GTPase_Obg"/>
    <property type="match status" value="1"/>
</dbReference>
<dbReference type="InterPro" id="IPR031167">
    <property type="entry name" value="G_OBG"/>
</dbReference>
<dbReference type="InterPro" id="IPR006073">
    <property type="entry name" value="GTP-bd"/>
</dbReference>
<dbReference type="InterPro" id="IPR014100">
    <property type="entry name" value="GTP-bd_Obg/CgtA"/>
</dbReference>
<dbReference type="InterPro" id="IPR036346">
    <property type="entry name" value="GTP-bd_prot_GTP1/OBG_C_sf"/>
</dbReference>
<dbReference type="InterPro" id="IPR006074">
    <property type="entry name" value="GTP1-OBG_CS"/>
</dbReference>
<dbReference type="InterPro" id="IPR006169">
    <property type="entry name" value="GTP1_OBG_dom"/>
</dbReference>
<dbReference type="InterPro" id="IPR036726">
    <property type="entry name" value="GTP1_OBG_dom_sf"/>
</dbReference>
<dbReference type="InterPro" id="IPR045086">
    <property type="entry name" value="OBG_GTPase"/>
</dbReference>
<dbReference type="InterPro" id="IPR015349">
    <property type="entry name" value="OCT_dom"/>
</dbReference>
<dbReference type="InterPro" id="IPR027417">
    <property type="entry name" value="P-loop_NTPase"/>
</dbReference>
<dbReference type="NCBIfam" id="TIGR02729">
    <property type="entry name" value="Obg_CgtA"/>
    <property type="match status" value="1"/>
</dbReference>
<dbReference type="NCBIfam" id="TIGR03595">
    <property type="entry name" value="Obg_CgtA_exten"/>
    <property type="match status" value="1"/>
</dbReference>
<dbReference type="NCBIfam" id="NF008954">
    <property type="entry name" value="PRK12296.1"/>
    <property type="match status" value="1"/>
</dbReference>
<dbReference type="NCBIfam" id="NF008955">
    <property type="entry name" value="PRK12297.1"/>
    <property type="match status" value="1"/>
</dbReference>
<dbReference type="NCBIfam" id="NF008956">
    <property type="entry name" value="PRK12299.1"/>
    <property type="match status" value="1"/>
</dbReference>
<dbReference type="PANTHER" id="PTHR11702">
    <property type="entry name" value="DEVELOPMENTALLY REGULATED GTP-BINDING PROTEIN-RELATED"/>
    <property type="match status" value="1"/>
</dbReference>
<dbReference type="PANTHER" id="PTHR11702:SF31">
    <property type="entry name" value="MITOCHONDRIAL RIBOSOME-ASSOCIATED GTPASE 2"/>
    <property type="match status" value="1"/>
</dbReference>
<dbReference type="Pfam" id="PF09269">
    <property type="entry name" value="DUF1967"/>
    <property type="match status" value="1"/>
</dbReference>
<dbReference type="Pfam" id="PF01018">
    <property type="entry name" value="GTP1_OBG"/>
    <property type="match status" value="1"/>
</dbReference>
<dbReference type="Pfam" id="PF01926">
    <property type="entry name" value="MMR_HSR1"/>
    <property type="match status" value="1"/>
</dbReference>
<dbReference type="PRINTS" id="PR00326">
    <property type="entry name" value="GTP1OBG"/>
</dbReference>
<dbReference type="SUPFAM" id="SSF102741">
    <property type="entry name" value="Obg GTP-binding protein C-terminal domain"/>
    <property type="match status" value="1"/>
</dbReference>
<dbReference type="SUPFAM" id="SSF82051">
    <property type="entry name" value="Obg GTP-binding protein N-terminal domain"/>
    <property type="match status" value="1"/>
</dbReference>
<dbReference type="SUPFAM" id="SSF52540">
    <property type="entry name" value="P-loop containing nucleoside triphosphate hydrolases"/>
    <property type="match status" value="1"/>
</dbReference>
<dbReference type="PROSITE" id="PS51710">
    <property type="entry name" value="G_OBG"/>
    <property type="match status" value="1"/>
</dbReference>
<dbReference type="PROSITE" id="PS00905">
    <property type="entry name" value="GTP1_OBG"/>
    <property type="match status" value="1"/>
</dbReference>
<dbReference type="PROSITE" id="PS51883">
    <property type="entry name" value="OBG"/>
    <property type="match status" value="1"/>
</dbReference>
<dbReference type="PROSITE" id="PS51881">
    <property type="entry name" value="OCT"/>
    <property type="match status" value="1"/>
</dbReference>
<proteinExistence type="inferred from homology"/>
<comment type="function">
    <text evidence="1">An essential GTPase which binds GTP, GDP and possibly (p)ppGpp with moderate affinity, with high nucleotide exchange rates and a fairly low GTP hydrolysis rate. Plays a role in control of the cell cycle, stress response, ribosome biogenesis and in those bacteria that undergo differentiation, in morphogenesis control.</text>
</comment>
<comment type="cofactor">
    <cofactor evidence="1">
        <name>Mg(2+)</name>
        <dbReference type="ChEBI" id="CHEBI:18420"/>
    </cofactor>
</comment>
<comment type="subunit">
    <text evidence="1">Monomer.</text>
</comment>
<comment type="subcellular location">
    <subcellularLocation>
        <location evidence="1">Cytoplasm</location>
    </subcellularLocation>
</comment>
<comment type="similarity">
    <text evidence="1">Belongs to the TRAFAC class OBG-HflX-like GTPase superfamily. OBG GTPase family.</text>
</comment>